<comment type="function">
    <text evidence="5 6">Produces nitric oxide (NO) which is a messenger molecule with diverse functions throughout the body. In macrophages, NO mediates tumoricidal and bactericidal actions. Also has nitrosylase activity and mediates cysteine S-nitrosylation of cytoplasmic target proteins such PTGS2/COX2. As component of the iNOS-S100A8/9 transnitrosylase complex involved in the selective inflammatory stimulus-dependent S-nitrosylation of GAPDH implicated in regulation of the GAIT complex activity and probably multiple targets including ANXA5, EZR, MSN and VIM. Involved in inflammation, enhances the synthesis of pro-inflammatory mediators such as IL6 and IL8.</text>
</comment>
<comment type="catalytic activity">
    <reaction evidence="5">
        <text>2 L-arginine + 3 NADPH + 4 O2 + H(+) = 2 L-citrulline + 2 nitric oxide + 3 NADP(+) + 4 H2O</text>
        <dbReference type="Rhea" id="RHEA:19897"/>
        <dbReference type="ChEBI" id="CHEBI:15377"/>
        <dbReference type="ChEBI" id="CHEBI:15378"/>
        <dbReference type="ChEBI" id="CHEBI:15379"/>
        <dbReference type="ChEBI" id="CHEBI:16480"/>
        <dbReference type="ChEBI" id="CHEBI:32682"/>
        <dbReference type="ChEBI" id="CHEBI:57743"/>
        <dbReference type="ChEBI" id="CHEBI:57783"/>
        <dbReference type="ChEBI" id="CHEBI:58349"/>
        <dbReference type="EC" id="1.14.13.39"/>
    </reaction>
    <physiologicalReaction direction="left-to-right" evidence="5">
        <dbReference type="Rhea" id="RHEA:19898"/>
    </physiologicalReaction>
</comment>
<comment type="cofactor">
    <cofactor evidence="5">
        <name>heme b</name>
        <dbReference type="ChEBI" id="CHEBI:60344"/>
    </cofactor>
</comment>
<comment type="cofactor">
    <cofactor evidence="3">
        <name>FAD</name>
        <dbReference type="ChEBI" id="CHEBI:57692"/>
    </cofactor>
    <text evidence="3">Binds 1 FAD.</text>
</comment>
<comment type="cofactor">
    <cofactor evidence="5">
        <name>FMN</name>
        <dbReference type="ChEBI" id="CHEBI:58210"/>
    </cofactor>
    <text evidence="5">Binds 1 FMN.</text>
</comment>
<comment type="cofactor">
    <cofactor evidence="5">
        <name>(6R)-L-erythro-5,6,7,8-tetrahydrobiopterin</name>
        <dbReference type="ChEBI" id="CHEBI:59560"/>
    </cofactor>
    <text evidence="5">Tetrahydrobiopterin (BH4). May stabilize the dimeric form of the enzyme.</text>
</comment>
<comment type="activity regulation">
    <text evidence="1">Regulated by calcium/calmodulin.</text>
</comment>
<comment type="subunit">
    <text evidence="4">Homodimer. Interacts with NHERF1. Interacts with GAPDH; induced by oxidatively-modified low-densitity lipoprotein (LDL(ox)). Interacts with S100A8 and S100A9 to form the iNOS-S100A8/9 transnitrosylase complex. Interacts with SPSB1, SPSB2 and SPSB4. Interacts with ELOC and CUL5 in the presence of SPSB1 or SPSB2 or SPSB4. Forms a complex with ASL, ASS1 and HSP90AA1; the complex regulates cell-autonomous L-arginine synthesis and citrulline recycling while channeling extracellular L-arginine to nitric oxide synthesis pathway.</text>
</comment>
<comment type="subcellular location">
    <subcellularLocation>
        <location evidence="5">Cytoplasm</location>
        <location evidence="5">Cytosol</location>
    </subcellularLocation>
    <text evidence="5">Localizes as discrete foci scattered throughout the cytosol and in the presence of SPSB1 and SPSB4, exhibits a more diffuse cytosolic localization.</text>
</comment>
<comment type="induction">
    <text>By lipopolysaccharide (LPS).</text>
</comment>
<comment type="PTM">
    <text evidence="5">Polyubiquitinated; mediated by SPSB1, SPSB2 and SPSB4, leading to proteasomal degradation.</text>
</comment>
<comment type="similarity">
    <text evidence="8">Belongs to the NOS family.</text>
</comment>
<sequence length="162" mass="17813">GKDINNNMEKAACATSSLVTQDDLQYHSLSKQQNESPQPLVGTGKKSPESLVKPDATPLSSPRHVRIKNWGSGMTFQDTLHHKAKGILTCRSKSCLGSIMTPKSLTRGPRDKPTPPDELLPQAIEFVNLSLEISVQDQIPPVCNDCQYYGSFKEAKIEEHLA</sequence>
<name>NOS2_MACMU</name>
<evidence type="ECO:0000250" key="1"/>
<evidence type="ECO:0000250" key="2">
    <source>
        <dbReference type="UniProtKB" id="P29474"/>
    </source>
</evidence>
<evidence type="ECO:0000250" key="3">
    <source>
        <dbReference type="UniProtKB" id="P29476"/>
    </source>
</evidence>
<evidence type="ECO:0000250" key="4">
    <source>
        <dbReference type="UniProtKB" id="P29477"/>
    </source>
</evidence>
<evidence type="ECO:0000250" key="5">
    <source>
        <dbReference type="UniProtKB" id="P35228"/>
    </source>
</evidence>
<evidence type="ECO:0000250" key="6">
    <source>
        <dbReference type="UniProtKB" id="P79290"/>
    </source>
</evidence>
<evidence type="ECO:0000256" key="7">
    <source>
        <dbReference type="SAM" id="MobiDB-lite"/>
    </source>
</evidence>
<evidence type="ECO:0000305" key="8"/>
<feature type="chain" id="PRO_0000170933" description="Nitric oxide synthase, inducible">
    <location>
        <begin position="1" status="less than"/>
        <end position="162" status="greater than"/>
    </location>
</feature>
<feature type="region of interest" description="Disordered" evidence="7">
    <location>
        <begin position="24"/>
        <end position="65"/>
    </location>
</feature>
<feature type="compositionally biased region" description="Polar residues" evidence="7">
    <location>
        <begin position="24"/>
        <end position="37"/>
    </location>
</feature>
<feature type="binding site" evidence="5">
    <location>
        <position position="90"/>
    </location>
    <ligand>
        <name>Zn(2+)</name>
        <dbReference type="ChEBI" id="CHEBI:29105"/>
        <note>ligand shared between homodimeric partners</note>
    </ligand>
</feature>
<feature type="binding site" evidence="5">
    <location>
        <position position="95"/>
    </location>
    <ligand>
        <name>Zn(2+)</name>
        <dbReference type="ChEBI" id="CHEBI:29105"/>
        <note>ligand shared between homodimeric partners</note>
    </ligand>
</feature>
<feature type="binding site" evidence="2">
    <location>
        <position position="98"/>
    </location>
    <ligand>
        <name>(6R)-L-erythro-5,6,7,8-tetrahydrobiopterin</name>
        <dbReference type="ChEBI" id="CHEBI:59560"/>
    </ligand>
</feature>
<feature type="binding site" evidence="2">
    <location>
        <position position="132"/>
    </location>
    <ligand>
        <name>L-arginine</name>
        <dbReference type="ChEBI" id="CHEBI:32682"/>
    </ligand>
</feature>
<feature type="binding site" evidence="3">
    <location>
        <position position="160"/>
    </location>
    <ligand>
        <name>FAD</name>
        <dbReference type="ChEBI" id="CHEBI:57692"/>
    </ligand>
</feature>
<feature type="non-terminal residue">
    <location>
        <position position="1"/>
    </location>
</feature>
<feature type="non-terminal residue">
    <location>
        <position position="162"/>
    </location>
</feature>
<proteinExistence type="evidence at transcript level"/>
<keyword id="KW-0106">Calcium</keyword>
<keyword id="KW-0112">Calmodulin-binding</keyword>
<keyword id="KW-0963">Cytoplasm</keyword>
<keyword id="KW-0274">FAD</keyword>
<keyword id="KW-0285">Flavoprotein</keyword>
<keyword id="KW-0288">FMN</keyword>
<keyword id="KW-0349">Heme</keyword>
<keyword id="KW-0408">Iron</keyword>
<keyword id="KW-0479">Metal-binding</keyword>
<keyword id="KW-0521">NADP</keyword>
<keyword id="KW-0560">Oxidoreductase</keyword>
<keyword id="KW-1185">Reference proteome</keyword>
<keyword id="KW-0832">Ubl conjugation</keyword>
<keyword id="KW-0862">Zinc</keyword>
<protein>
    <recommendedName>
        <fullName>Nitric oxide synthase, inducible</fullName>
        <ecNumber evidence="5">1.14.13.39</ecNumber>
    </recommendedName>
    <alternativeName>
        <fullName>Inducible NO synthase</fullName>
        <shortName>Inducible NOS</shortName>
        <shortName>iNOS</shortName>
    </alternativeName>
    <alternativeName>
        <fullName>NOS type II</fullName>
    </alternativeName>
    <alternativeName>
        <fullName>Peptidyl-cysteine S-nitrosylase NOS2</fullName>
    </alternativeName>
</protein>
<accession>O46660</accession>
<dbReference type="EC" id="1.14.13.39" evidence="5"/>
<dbReference type="EMBL" id="U31907">
    <property type="protein sequence ID" value="AAC39525.1"/>
    <property type="molecule type" value="mRNA"/>
</dbReference>
<dbReference type="SMR" id="O46660"/>
<dbReference type="STRING" id="9544.ENSMMUP00000080305"/>
<dbReference type="InParanoid" id="O46660"/>
<dbReference type="Proteomes" id="UP000006718">
    <property type="component" value="Unassembled WGS sequence"/>
</dbReference>
<dbReference type="GO" id="GO:0005829">
    <property type="term" value="C:cytosol"/>
    <property type="evidence" value="ECO:0007669"/>
    <property type="project" value="UniProtKB-SubCell"/>
</dbReference>
<dbReference type="GO" id="GO:0005516">
    <property type="term" value="F:calmodulin binding"/>
    <property type="evidence" value="ECO:0007669"/>
    <property type="project" value="UniProtKB-KW"/>
</dbReference>
<dbReference type="GO" id="GO:0046872">
    <property type="term" value="F:metal ion binding"/>
    <property type="evidence" value="ECO:0007669"/>
    <property type="project" value="UniProtKB-KW"/>
</dbReference>
<dbReference type="GO" id="GO:0004517">
    <property type="term" value="F:nitric-oxide synthase activity"/>
    <property type="evidence" value="ECO:0000250"/>
    <property type="project" value="UniProtKB"/>
</dbReference>
<dbReference type="GO" id="GO:0006809">
    <property type="term" value="P:nitric oxide biosynthetic process"/>
    <property type="evidence" value="ECO:0007669"/>
    <property type="project" value="InterPro"/>
</dbReference>
<dbReference type="GO" id="GO:0018119">
    <property type="term" value="P:peptidyl-cysteine S-nitrosylation"/>
    <property type="evidence" value="ECO:0000250"/>
    <property type="project" value="UniProtKB"/>
</dbReference>
<dbReference type="GO" id="GO:0032755">
    <property type="term" value="P:positive regulation of interleukin-6 production"/>
    <property type="evidence" value="ECO:0000250"/>
    <property type="project" value="UniProtKB"/>
</dbReference>
<dbReference type="GO" id="GO:0032757">
    <property type="term" value="P:positive regulation of interleukin-8 production"/>
    <property type="evidence" value="ECO:0000250"/>
    <property type="project" value="UniProtKB"/>
</dbReference>
<dbReference type="GO" id="GO:0032310">
    <property type="term" value="P:prostaglandin secretion"/>
    <property type="evidence" value="ECO:0000250"/>
    <property type="project" value="UniProtKB"/>
</dbReference>
<dbReference type="GO" id="GO:1900015">
    <property type="term" value="P:regulation of cytokine production involved in inflammatory response"/>
    <property type="evidence" value="ECO:0000250"/>
    <property type="project" value="UniProtKB"/>
</dbReference>
<dbReference type="Gene3D" id="3.90.340.10">
    <property type="entry name" value="Nitric Oxide Synthase, Chain A, domain 1"/>
    <property type="match status" value="1"/>
</dbReference>
<dbReference type="InterPro" id="IPR050607">
    <property type="entry name" value="NOS"/>
</dbReference>
<dbReference type="InterPro" id="IPR044943">
    <property type="entry name" value="NOS_dom_1"/>
</dbReference>
<dbReference type="InterPro" id="IPR036119">
    <property type="entry name" value="NOS_N_sf"/>
</dbReference>
<dbReference type="PANTHER" id="PTHR43410:SF4">
    <property type="entry name" value="NITRIC OXIDE SYNTHASE"/>
    <property type="match status" value="1"/>
</dbReference>
<dbReference type="PANTHER" id="PTHR43410">
    <property type="entry name" value="NITRIC OXIDE SYNTHASE OXYGENASE"/>
    <property type="match status" value="1"/>
</dbReference>
<dbReference type="SUPFAM" id="SSF56512">
    <property type="entry name" value="Nitric oxide (NO) synthase oxygenase domain"/>
    <property type="match status" value="1"/>
</dbReference>
<organism>
    <name type="scientific">Macaca mulatta</name>
    <name type="common">Rhesus macaque</name>
    <dbReference type="NCBI Taxonomy" id="9544"/>
    <lineage>
        <taxon>Eukaryota</taxon>
        <taxon>Metazoa</taxon>
        <taxon>Chordata</taxon>
        <taxon>Craniata</taxon>
        <taxon>Vertebrata</taxon>
        <taxon>Euteleostomi</taxon>
        <taxon>Mammalia</taxon>
        <taxon>Eutheria</taxon>
        <taxon>Euarchontoglires</taxon>
        <taxon>Primates</taxon>
        <taxon>Haplorrhini</taxon>
        <taxon>Catarrhini</taxon>
        <taxon>Cercopithecidae</taxon>
        <taxon>Cercopithecinae</taxon>
        <taxon>Macaca</taxon>
    </lineage>
</organism>
<reference key="1">
    <citation type="journal article" date="1996" name="Mol. Med.">
        <title>Expression of inflammatory cytokines and inducible nitric oxide synthase in brains of SIV-infected rhesus monkeys: applications to HIV-induced central nervous system disease.</title>
        <authorList>
            <person name="Lane T.E."/>
            <person name="Buchmeier M.J."/>
            <person name="Watry D.D."/>
            <person name="Fox H.S."/>
        </authorList>
    </citation>
    <scope>NUCLEOTIDE SEQUENCE [MRNA]</scope>
    <source>
        <tissue>Microglia</tissue>
    </source>
</reference>
<gene>
    <name type="primary">NOS2</name>
</gene>